<evidence type="ECO:0000255" key="1">
    <source>
        <dbReference type="HAMAP-Rule" id="MF_01416"/>
    </source>
</evidence>
<comment type="function">
    <text evidence="1">F(1)F(0) ATP synthase produces ATP from ADP in the presence of a proton or sodium gradient. F-type ATPases consist of two structural domains, F(1) containing the extramembraneous catalytic core and F(0) containing the membrane proton channel, linked together by a central stalk and a peripheral stalk. During catalysis, ATP synthesis in the catalytic domain of F(1) is coupled via a rotary mechanism of the central stalk subunits to proton translocation.</text>
</comment>
<comment type="function">
    <text evidence="1">This protein is part of the stalk that links CF(0) to CF(1). It either transmits conformational changes from CF(0) to CF(1) or is implicated in proton conduction.</text>
</comment>
<comment type="subunit">
    <text evidence="1">F-type ATPases have 2 components, F(1) - the catalytic core - and F(0) - the membrane proton channel. F(1) has five subunits: alpha(3), beta(3), gamma(1), delta(1), epsilon(1). F(0) has three main subunits: a(1), b(2) and c(10-14). The alpha and beta chains form an alternating ring which encloses part of the gamma chain. F(1) is attached to F(0) by a central stalk formed by the gamma and epsilon chains, while a peripheral stalk is formed by the delta and b chains.</text>
</comment>
<comment type="subcellular location">
    <subcellularLocation>
        <location evidence="1">Cell membrane</location>
        <topology evidence="1">Peripheral membrane protein</topology>
    </subcellularLocation>
</comment>
<comment type="similarity">
    <text evidence="1">Belongs to the ATPase delta chain family.</text>
</comment>
<dbReference type="EMBL" id="AE016879">
    <property type="protein sequence ID" value="AAP29194.1"/>
    <property type="molecule type" value="Genomic_DNA"/>
</dbReference>
<dbReference type="EMBL" id="AE017334">
    <property type="protein sequence ID" value="AAT34694.1"/>
    <property type="molecule type" value="Genomic_DNA"/>
</dbReference>
<dbReference type="EMBL" id="AE017225">
    <property type="protein sequence ID" value="AAT57447.1"/>
    <property type="molecule type" value="Genomic_DNA"/>
</dbReference>
<dbReference type="RefSeq" id="NP_847708.1">
    <property type="nucleotide sequence ID" value="NC_003997.3"/>
</dbReference>
<dbReference type="RefSeq" id="WP_000064678.1">
    <property type="nucleotide sequence ID" value="NZ_WXXJ01000038.1"/>
</dbReference>
<dbReference type="RefSeq" id="YP_031397.1">
    <property type="nucleotide sequence ID" value="NC_005945.1"/>
</dbReference>
<dbReference type="SMR" id="Q81JZ2"/>
<dbReference type="STRING" id="261594.GBAA_5550"/>
<dbReference type="DNASU" id="1085235"/>
<dbReference type="GeneID" id="45025138"/>
<dbReference type="KEGG" id="ban:BA_5550"/>
<dbReference type="KEGG" id="bar:GBAA_5550"/>
<dbReference type="KEGG" id="bat:BAS5158"/>
<dbReference type="PATRIC" id="fig|198094.11.peg.5510"/>
<dbReference type="eggNOG" id="COG0712">
    <property type="taxonomic scope" value="Bacteria"/>
</dbReference>
<dbReference type="HOGENOM" id="CLU_085114_4_1_9"/>
<dbReference type="OMA" id="MVDNIQD"/>
<dbReference type="OrthoDB" id="9802471at2"/>
<dbReference type="Proteomes" id="UP000000427">
    <property type="component" value="Chromosome"/>
</dbReference>
<dbReference type="Proteomes" id="UP000000594">
    <property type="component" value="Chromosome"/>
</dbReference>
<dbReference type="GO" id="GO:0005886">
    <property type="term" value="C:plasma membrane"/>
    <property type="evidence" value="ECO:0007669"/>
    <property type="project" value="UniProtKB-SubCell"/>
</dbReference>
<dbReference type="GO" id="GO:0045259">
    <property type="term" value="C:proton-transporting ATP synthase complex"/>
    <property type="evidence" value="ECO:0007669"/>
    <property type="project" value="UniProtKB-KW"/>
</dbReference>
<dbReference type="GO" id="GO:0046933">
    <property type="term" value="F:proton-transporting ATP synthase activity, rotational mechanism"/>
    <property type="evidence" value="ECO:0007669"/>
    <property type="project" value="UniProtKB-UniRule"/>
</dbReference>
<dbReference type="Gene3D" id="1.10.520.20">
    <property type="entry name" value="N-terminal domain of the delta subunit of the F1F0-ATP synthase"/>
    <property type="match status" value="1"/>
</dbReference>
<dbReference type="HAMAP" id="MF_01416">
    <property type="entry name" value="ATP_synth_delta_bact"/>
    <property type="match status" value="1"/>
</dbReference>
<dbReference type="InterPro" id="IPR026015">
    <property type="entry name" value="ATP_synth_OSCP/delta_N_sf"/>
</dbReference>
<dbReference type="InterPro" id="IPR020781">
    <property type="entry name" value="ATPase_OSCP/d_CS"/>
</dbReference>
<dbReference type="InterPro" id="IPR000711">
    <property type="entry name" value="ATPase_OSCP/dsu"/>
</dbReference>
<dbReference type="NCBIfam" id="TIGR01145">
    <property type="entry name" value="ATP_synt_delta"/>
    <property type="match status" value="1"/>
</dbReference>
<dbReference type="NCBIfam" id="NF004402">
    <property type="entry name" value="PRK05758.2-2"/>
    <property type="match status" value="1"/>
</dbReference>
<dbReference type="NCBIfam" id="NF004403">
    <property type="entry name" value="PRK05758.2-4"/>
    <property type="match status" value="1"/>
</dbReference>
<dbReference type="PANTHER" id="PTHR11910">
    <property type="entry name" value="ATP SYNTHASE DELTA CHAIN"/>
    <property type="match status" value="1"/>
</dbReference>
<dbReference type="Pfam" id="PF00213">
    <property type="entry name" value="OSCP"/>
    <property type="match status" value="1"/>
</dbReference>
<dbReference type="PRINTS" id="PR00125">
    <property type="entry name" value="ATPASEDELTA"/>
</dbReference>
<dbReference type="SUPFAM" id="SSF47928">
    <property type="entry name" value="N-terminal domain of the delta subunit of the F1F0-ATP synthase"/>
    <property type="match status" value="1"/>
</dbReference>
<dbReference type="PROSITE" id="PS00389">
    <property type="entry name" value="ATPASE_DELTA"/>
    <property type="match status" value="1"/>
</dbReference>
<organism>
    <name type="scientific">Bacillus anthracis</name>
    <dbReference type="NCBI Taxonomy" id="1392"/>
    <lineage>
        <taxon>Bacteria</taxon>
        <taxon>Bacillati</taxon>
        <taxon>Bacillota</taxon>
        <taxon>Bacilli</taxon>
        <taxon>Bacillales</taxon>
        <taxon>Bacillaceae</taxon>
        <taxon>Bacillus</taxon>
        <taxon>Bacillus cereus group</taxon>
    </lineage>
</organism>
<reference key="1">
    <citation type="journal article" date="2003" name="Nature">
        <title>The genome sequence of Bacillus anthracis Ames and comparison to closely related bacteria.</title>
        <authorList>
            <person name="Read T.D."/>
            <person name="Peterson S.N."/>
            <person name="Tourasse N.J."/>
            <person name="Baillie L.W."/>
            <person name="Paulsen I.T."/>
            <person name="Nelson K.E."/>
            <person name="Tettelin H."/>
            <person name="Fouts D.E."/>
            <person name="Eisen J.A."/>
            <person name="Gill S.R."/>
            <person name="Holtzapple E.K."/>
            <person name="Okstad O.A."/>
            <person name="Helgason E."/>
            <person name="Rilstone J."/>
            <person name="Wu M."/>
            <person name="Kolonay J.F."/>
            <person name="Beanan M.J."/>
            <person name="Dodson R.J."/>
            <person name="Brinkac L.M."/>
            <person name="Gwinn M.L."/>
            <person name="DeBoy R.T."/>
            <person name="Madpu R."/>
            <person name="Daugherty S.C."/>
            <person name="Durkin A.S."/>
            <person name="Haft D.H."/>
            <person name="Nelson W.C."/>
            <person name="Peterson J.D."/>
            <person name="Pop M."/>
            <person name="Khouri H.M."/>
            <person name="Radune D."/>
            <person name="Benton J.L."/>
            <person name="Mahamoud Y."/>
            <person name="Jiang L."/>
            <person name="Hance I.R."/>
            <person name="Weidman J.F."/>
            <person name="Berry K.J."/>
            <person name="Plaut R.D."/>
            <person name="Wolf A.M."/>
            <person name="Watkins K.L."/>
            <person name="Nierman W.C."/>
            <person name="Hazen A."/>
            <person name="Cline R.T."/>
            <person name="Redmond C."/>
            <person name="Thwaite J.E."/>
            <person name="White O."/>
            <person name="Salzberg S.L."/>
            <person name="Thomason B."/>
            <person name="Friedlander A.M."/>
            <person name="Koehler T.M."/>
            <person name="Hanna P.C."/>
            <person name="Kolstoe A.-B."/>
            <person name="Fraser C.M."/>
        </authorList>
    </citation>
    <scope>NUCLEOTIDE SEQUENCE [LARGE SCALE GENOMIC DNA]</scope>
    <source>
        <strain>Ames / isolate Porton</strain>
    </source>
</reference>
<reference key="2">
    <citation type="submission" date="2004-01" db="EMBL/GenBank/DDBJ databases">
        <title>Complete genome sequence of Bacillus anthracis Sterne.</title>
        <authorList>
            <person name="Brettin T.S."/>
            <person name="Bruce D."/>
            <person name="Challacombe J.F."/>
            <person name="Gilna P."/>
            <person name="Han C."/>
            <person name="Hill K."/>
            <person name="Hitchcock P."/>
            <person name="Jackson P."/>
            <person name="Keim P."/>
            <person name="Longmire J."/>
            <person name="Lucas S."/>
            <person name="Okinaka R."/>
            <person name="Richardson P."/>
            <person name="Rubin E."/>
            <person name="Tice H."/>
        </authorList>
    </citation>
    <scope>NUCLEOTIDE SEQUENCE [LARGE SCALE GENOMIC DNA]</scope>
    <source>
        <strain>Sterne</strain>
    </source>
</reference>
<reference key="3">
    <citation type="journal article" date="2009" name="J. Bacteriol.">
        <title>The complete genome sequence of Bacillus anthracis Ames 'Ancestor'.</title>
        <authorList>
            <person name="Ravel J."/>
            <person name="Jiang L."/>
            <person name="Stanley S.T."/>
            <person name="Wilson M.R."/>
            <person name="Decker R.S."/>
            <person name="Read T.D."/>
            <person name="Worsham P."/>
            <person name="Keim P.S."/>
            <person name="Salzberg S.L."/>
            <person name="Fraser-Liggett C.M."/>
            <person name="Rasko D.A."/>
        </authorList>
    </citation>
    <scope>NUCLEOTIDE SEQUENCE [LARGE SCALE GENOMIC DNA]</scope>
    <source>
        <strain>Ames ancestor</strain>
    </source>
</reference>
<gene>
    <name evidence="1" type="primary">atpH</name>
    <name type="ordered locus">BA_5550</name>
    <name type="ordered locus">GBAA_5550</name>
    <name type="ordered locus">BAS5158</name>
</gene>
<keyword id="KW-0066">ATP synthesis</keyword>
<keyword id="KW-1003">Cell membrane</keyword>
<keyword id="KW-0139">CF(1)</keyword>
<keyword id="KW-0375">Hydrogen ion transport</keyword>
<keyword id="KW-0406">Ion transport</keyword>
<keyword id="KW-0472">Membrane</keyword>
<keyword id="KW-1185">Reference proteome</keyword>
<keyword id="KW-0813">Transport</keyword>
<name>ATPD_BACAN</name>
<feature type="chain" id="PRO_0000370886" description="ATP synthase subunit delta">
    <location>
        <begin position="1"/>
        <end position="180"/>
    </location>
</feature>
<sequence>MSNGIVAKRYAVALFKIAKEKHVLEMFEEELRLVQNVYEKNGELHSFLTQPNISKEQKKTFLANVFGSVSESILNTLYILIDNKRIDILSDIANEYVVLANEERNVADATVYSTRLLSEEEKLNIAEAFAKRTGKDAIRVKNVVDEDLLGGIKVRIGNRIYDGSLQGKLARIQRELMKNR</sequence>
<accession>Q81JZ2</accession>
<accession>Q6HQJ1</accession>
<accession>Q6KJW6</accession>
<protein>
    <recommendedName>
        <fullName evidence="1">ATP synthase subunit delta</fullName>
    </recommendedName>
    <alternativeName>
        <fullName evidence="1">ATP synthase F(1) sector subunit delta</fullName>
    </alternativeName>
    <alternativeName>
        <fullName evidence="1">F-type ATPase subunit delta</fullName>
        <shortName evidence="1">F-ATPase subunit delta</shortName>
    </alternativeName>
</protein>
<proteinExistence type="inferred from homology"/>